<protein>
    <recommendedName>
        <fullName evidence="1">Mitochondrial distribution and morphology protein 12</fullName>
    </recommendedName>
    <alternativeName>
        <fullName evidence="1">Mitochondrial inheritance component mdm12</fullName>
    </alternativeName>
</protein>
<feature type="chain" id="PRO_0000384313" description="Mitochondrial distribution and morphology protein 12">
    <location>
        <begin position="1"/>
        <end position="431"/>
    </location>
</feature>
<feature type="domain" description="SMP-LTD" evidence="1">
    <location>
        <begin position="1"/>
        <end position="431"/>
    </location>
</feature>
<feature type="region of interest" description="Disordered" evidence="2">
    <location>
        <begin position="68"/>
        <end position="153"/>
    </location>
</feature>
<feature type="region of interest" description="Disordered" evidence="2">
    <location>
        <begin position="209"/>
        <end position="289"/>
    </location>
</feature>
<feature type="compositionally biased region" description="Acidic residues" evidence="2">
    <location>
        <begin position="69"/>
        <end position="96"/>
    </location>
</feature>
<feature type="compositionally biased region" description="Basic and acidic residues" evidence="2">
    <location>
        <begin position="97"/>
        <end position="113"/>
    </location>
</feature>
<feature type="compositionally biased region" description="Polar residues" evidence="2">
    <location>
        <begin position="115"/>
        <end position="129"/>
    </location>
</feature>
<feature type="compositionally biased region" description="Low complexity" evidence="2">
    <location>
        <begin position="241"/>
        <end position="252"/>
    </location>
</feature>
<organism>
    <name type="scientific">Sclerotinia sclerotiorum (strain ATCC 18683 / 1980 / Ss-1)</name>
    <name type="common">White mold</name>
    <name type="synonym">Whetzelinia sclerotiorum</name>
    <dbReference type="NCBI Taxonomy" id="665079"/>
    <lineage>
        <taxon>Eukaryota</taxon>
        <taxon>Fungi</taxon>
        <taxon>Dikarya</taxon>
        <taxon>Ascomycota</taxon>
        <taxon>Pezizomycotina</taxon>
        <taxon>Leotiomycetes</taxon>
        <taxon>Helotiales</taxon>
        <taxon>Sclerotiniaceae</taxon>
        <taxon>Sclerotinia</taxon>
    </lineage>
</organism>
<accession>A7ELE2</accession>
<reference key="1">
    <citation type="journal article" date="2011" name="PLoS Genet.">
        <title>Genomic analysis of the necrotrophic fungal pathogens Sclerotinia sclerotiorum and Botrytis cinerea.</title>
        <authorList>
            <person name="Amselem J."/>
            <person name="Cuomo C.A."/>
            <person name="van Kan J.A.L."/>
            <person name="Viaud M."/>
            <person name="Benito E.P."/>
            <person name="Couloux A."/>
            <person name="Coutinho P.M."/>
            <person name="de Vries R.P."/>
            <person name="Dyer P.S."/>
            <person name="Fillinger S."/>
            <person name="Fournier E."/>
            <person name="Gout L."/>
            <person name="Hahn M."/>
            <person name="Kohn L."/>
            <person name="Lapalu N."/>
            <person name="Plummer K.M."/>
            <person name="Pradier J.-M."/>
            <person name="Quevillon E."/>
            <person name="Sharon A."/>
            <person name="Simon A."/>
            <person name="ten Have A."/>
            <person name="Tudzynski B."/>
            <person name="Tudzynski P."/>
            <person name="Wincker P."/>
            <person name="Andrew M."/>
            <person name="Anthouard V."/>
            <person name="Beever R.E."/>
            <person name="Beffa R."/>
            <person name="Benoit I."/>
            <person name="Bouzid O."/>
            <person name="Brault B."/>
            <person name="Chen Z."/>
            <person name="Choquer M."/>
            <person name="Collemare J."/>
            <person name="Cotton P."/>
            <person name="Danchin E.G."/>
            <person name="Da Silva C."/>
            <person name="Gautier A."/>
            <person name="Giraud C."/>
            <person name="Giraud T."/>
            <person name="Gonzalez C."/>
            <person name="Grossetete S."/>
            <person name="Gueldener U."/>
            <person name="Henrissat B."/>
            <person name="Howlett B.J."/>
            <person name="Kodira C."/>
            <person name="Kretschmer M."/>
            <person name="Lappartient A."/>
            <person name="Leroch M."/>
            <person name="Levis C."/>
            <person name="Mauceli E."/>
            <person name="Neuveglise C."/>
            <person name="Oeser B."/>
            <person name="Pearson M."/>
            <person name="Poulain J."/>
            <person name="Poussereau N."/>
            <person name="Quesneville H."/>
            <person name="Rascle C."/>
            <person name="Schumacher J."/>
            <person name="Segurens B."/>
            <person name="Sexton A."/>
            <person name="Silva E."/>
            <person name="Sirven C."/>
            <person name="Soanes D.M."/>
            <person name="Talbot N.J."/>
            <person name="Templeton M."/>
            <person name="Yandava C."/>
            <person name="Yarden O."/>
            <person name="Zeng Q."/>
            <person name="Rollins J.A."/>
            <person name="Lebrun M.-H."/>
            <person name="Dickman M."/>
        </authorList>
    </citation>
    <scope>NUCLEOTIDE SEQUENCE [LARGE SCALE GENOMIC DNA]</scope>
    <source>
        <strain>ATCC 18683 / 1980 / Ss-1</strain>
    </source>
</reference>
<comment type="function">
    <text evidence="1">Component of the ERMES/MDM complex, which serves as a molecular tether to connect the endoplasmic reticulum (ER) and mitochondria. Components of this complex are involved in the control of mitochondrial shape and protein biogenesis, and function in nonvesicular lipid trafficking between the ER and mitochondria. Mdm12 is required for the interaction of the ER-resident membrane protein mmm1 and the outer mitochondrial membrane-resident beta-barrel protein mdm10. The mdm12-mmm1 subcomplex functions in the major beta-barrel assembly pathway that is responsible for biogenesis of all mitochondrial outer membrane beta-barrel proteins, and acts in a late step after the SAM complex. The mdm10-mdm12-mmm1 subcomplex further acts in the TOM40-specific pathway after the action of the mdm12-mmm1 complex. Essential for establishing and maintaining the structure of mitochondria and maintenance of mtDNA nucleoids.</text>
</comment>
<comment type="subunit">
    <text evidence="1">Component of the ER-mitochondria encounter structure (ERMES) or MDM complex, composed of mmm1, mdm10, mdm12 and mdm34. A mmm1 homodimer associates with one molecule of mdm12 on each side in a pairwise head-to-tail manner, and the SMP-LTD domains of mmm1 and mdm12 generate a continuous hydrophobic tunnel for phospholipid trafficking.</text>
</comment>
<comment type="subcellular location">
    <subcellularLocation>
        <location evidence="1">Mitochondrion outer membrane</location>
        <topology evidence="1">Peripheral membrane protein</topology>
        <orientation evidence="1">Cytoplasmic side</orientation>
    </subcellularLocation>
    <subcellularLocation>
        <location evidence="1">Endoplasmic reticulum membrane</location>
        <topology evidence="1">Peripheral membrane protein</topology>
        <orientation evidence="1">Cytoplasmic side</orientation>
    </subcellularLocation>
    <text evidence="1">The ERMES/MDM complex localizes to a few discrete foci (around 10 per single cell), that represent mitochondria-endoplasmic reticulum junctions. These foci are often found next to mtDNA nucleoids.</text>
</comment>
<comment type="domain">
    <text evidence="1">The SMP-LTD domain is a barrel-like domain that can bind various types of glycerophospholipids in its interior and mediate their transfer between two adjacent bilayers.</text>
</comment>
<comment type="similarity">
    <text evidence="1">Belongs to the MDM12 family.</text>
</comment>
<gene>
    <name evidence="1" type="primary">mdm12</name>
    <name type="ORF">SS1G_06139</name>
</gene>
<keyword id="KW-0256">Endoplasmic reticulum</keyword>
<keyword id="KW-0445">Lipid transport</keyword>
<keyword id="KW-0446">Lipid-binding</keyword>
<keyword id="KW-0472">Membrane</keyword>
<keyword id="KW-0496">Mitochondrion</keyword>
<keyword id="KW-1000">Mitochondrion outer membrane</keyword>
<keyword id="KW-1185">Reference proteome</keyword>
<keyword id="KW-0813">Transport</keyword>
<dbReference type="EMBL" id="CH476627">
    <property type="protein sequence ID" value="EDO03658.1"/>
    <property type="molecule type" value="Genomic_DNA"/>
</dbReference>
<dbReference type="RefSeq" id="XP_001593217.1">
    <property type="nucleotide sequence ID" value="XM_001593167.1"/>
</dbReference>
<dbReference type="FunCoup" id="A7ELE2">
    <property type="interactions" value="43"/>
</dbReference>
<dbReference type="STRING" id="665079.A7ELE2"/>
<dbReference type="EnsemblFungi" id="EDO03658">
    <property type="protein sequence ID" value="EDO03658"/>
    <property type="gene ID" value="SS1G_06139"/>
</dbReference>
<dbReference type="GeneID" id="5489033"/>
<dbReference type="KEGG" id="ssl:SS1G_06139"/>
<dbReference type="VEuPathDB" id="FungiDB:sscle_05g044590"/>
<dbReference type="eggNOG" id="ENOG502S3PB">
    <property type="taxonomic scope" value="Eukaryota"/>
</dbReference>
<dbReference type="HOGENOM" id="CLU_026794_0_0_1"/>
<dbReference type="InParanoid" id="A7ELE2"/>
<dbReference type="OMA" id="KRAHFCF"/>
<dbReference type="OrthoDB" id="3356905at2759"/>
<dbReference type="Proteomes" id="UP000001312">
    <property type="component" value="Unassembled WGS sequence"/>
</dbReference>
<dbReference type="GO" id="GO:0005789">
    <property type="term" value="C:endoplasmic reticulum membrane"/>
    <property type="evidence" value="ECO:0007669"/>
    <property type="project" value="UniProtKB-SubCell"/>
</dbReference>
<dbReference type="GO" id="GO:0032865">
    <property type="term" value="C:ERMES complex"/>
    <property type="evidence" value="ECO:0000318"/>
    <property type="project" value="GO_Central"/>
</dbReference>
<dbReference type="GO" id="GO:0008289">
    <property type="term" value="F:lipid binding"/>
    <property type="evidence" value="ECO:0007669"/>
    <property type="project" value="UniProtKB-KW"/>
</dbReference>
<dbReference type="GO" id="GO:0000002">
    <property type="term" value="P:mitochondrial genome maintenance"/>
    <property type="evidence" value="ECO:0007669"/>
    <property type="project" value="UniProtKB-UniRule"/>
</dbReference>
<dbReference type="GO" id="GO:1990456">
    <property type="term" value="P:mitochondrion-endoplasmic reticulum membrane tethering"/>
    <property type="evidence" value="ECO:0000318"/>
    <property type="project" value="GO_Central"/>
</dbReference>
<dbReference type="GO" id="GO:0015914">
    <property type="term" value="P:phospholipid transport"/>
    <property type="evidence" value="ECO:0000318"/>
    <property type="project" value="GO_Central"/>
</dbReference>
<dbReference type="GO" id="GO:0045040">
    <property type="term" value="P:protein insertion into mitochondrial outer membrane"/>
    <property type="evidence" value="ECO:0007669"/>
    <property type="project" value="UniProtKB-UniRule"/>
</dbReference>
<dbReference type="CDD" id="cd21672">
    <property type="entry name" value="SMP_Mdm12"/>
    <property type="match status" value="1"/>
</dbReference>
<dbReference type="HAMAP" id="MF_03104">
    <property type="entry name" value="Mdm12"/>
    <property type="match status" value="1"/>
</dbReference>
<dbReference type="InterPro" id="IPR027532">
    <property type="entry name" value="Mdm12"/>
</dbReference>
<dbReference type="InterPro" id="IPR019411">
    <property type="entry name" value="MMM1_dom"/>
</dbReference>
<dbReference type="InterPro" id="IPR031468">
    <property type="entry name" value="SMP_LBD"/>
</dbReference>
<dbReference type="PANTHER" id="PTHR28204">
    <property type="entry name" value="MITOCHONDRIAL DISTRIBUTION AND MORPHOLOGY PROTEIN 12"/>
    <property type="match status" value="1"/>
</dbReference>
<dbReference type="PANTHER" id="PTHR28204:SF1">
    <property type="entry name" value="MITOCHONDRIAL DISTRIBUTION AND MORPHOLOGY PROTEIN 12"/>
    <property type="match status" value="1"/>
</dbReference>
<dbReference type="Pfam" id="PF10296">
    <property type="entry name" value="MMM1"/>
    <property type="match status" value="1"/>
</dbReference>
<dbReference type="PROSITE" id="PS51847">
    <property type="entry name" value="SMP"/>
    <property type="match status" value="1"/>
</dbReference>
<name>MDM12_SCLS1</name>
<proteinExistence type="inferred from homology"/>
<sequence length="431" mass="47117">MSIDLNWETLTTGPDGIALAEKIRDFVHAKFQTVTLPRFIKGVKVHTFDFGSIAPEVELKDICDPLPDFYEDLDDDDGGSDEDDEGSNSCQTDEENEAAKTLRERRKMDRVERTANGSSNVSNPPSYTDTRYPGLRSMQASGDNGSPFLGVSTPGIPGGTSNLSYFHSQLASGFSGTQTPLAAVAGAHLPQGWPDRPSPSLHMSALRNQSHTSLSHTASERPMTPPQIADLSQQSIREKASASTLAVSSSTTGPVTRGGATEKTIPEEQTSEGEEPTSPPRRFREPKPEDLQTVFRVRYSGNIRLSLTVDILLDYPMPSFVGIPVRLNITGLSFDGVAVLAYIRKRAHFCFLSPEDAYAAIGADEKEAGGSGGMKMGALLHEIKVESEIGQRENGKQVLKNVGKVEKFVLEQVRRIFEDEFVYPSFWTFLV</sequence>
<evidence type="ECO:0000255" key="1">
    <source>
        <dbReference type="HAMAP-Rule" id="MF_03104"/>
    </source>
</evidence>
<evidence type="ECO:0000256" key="2">
    <source>
        <dbReference type="SAM" id="MobiDB-lite"/>
    </source>
</evidence>